<name>SPEH_PYRAR</name>
<evidence type="ECO:0000255" key="1">
    <source>
        <dbReference type="HAMAP-Rule" id="MF_00464"/>
    </source>
</evidence>
<protein>
    <recommendedName>
        <fullName evidence="1">S-adenosylmethionine decarboxylase proenzyme</fullName>
        <shortName evidence="1">AdoMetDC</shortName>
        <shortName evidence="1">SAMDC</shortName>
        <ecNumber evidence="1">4.1.1.50</ecNumber>
    </recommendedName>
    <component>
        <recommendedName>
            <fullName evidence="1">S-adenosylmethionine decarboxylase beta chain</fullName>
        </recommendedName>
    </component>
    <component>
        <recommendedName>
            <fullName evidence="1">S-adenosylmethionine decarboxylase alpha chain</fullName>
        </recommendedName>
    </component>
</protein>
<dbReference type="EC" id="4.1.1.50" evidence="1"/>
<dbReference type="EMBL" id="CP000660">
    <property type="protein sequence ID" value="ABP50208.1"/>
    <property type="molecule type" value="Genomic_DNA"/>
</dbReference>
<dbReference type="SMR" id="A4WIJ1"/>
<dbReference type="STRING" id="340102.Pars_0617"/>
<dbReference type="KEGG" id="pas:Pars_0617"/>
<dbReference type="HOGENOM" id="CLU_125470_2_1_2"/>
<dbReference type="OrthoDB" id="114016at2157"/>
<dbReference type="PhylomeDB" id="A4WIJ1"/>
<dbReference type="UniPathway" id="UPA00331">
    <property type="reaction ID" value="UER00451"/>
</dbReference>
<dbReference type="Proteomes" id="UP000001567">
    <property type="component" value="Chromosome"/>
</dbReference>
<dbReference type="GO" id="GO:0005829">
    <property type="term" value="C:cytosol"/>
    <property type="evidence" value="ECO:0007669"/>
    <property type="project" value="TreeGrafter"/>
</dbReference>
<dbReference type="GO" id="GO:0004014">
    <property type="term" value="F:adenosylmethionine decarboxylase activity"/>
    <property type="evidence" value="ECO:0007669"/>
    <property type="project" value="UniProtKB-UniRule"/>
</dbReference>
<dbReference type="GO" id="GO:0008295">
    <property type="term" value="P:spermidine biosynthetic process"/>
    <property type="evidence" value="ECO:0007669"/>
    <property type="project" value="UniProtKB-UniRule"/>
</dbReference>
<dbReference type="Gene3D" id="3.30.160.750">
    <property type="match status" value="1"/>
</dbReference>
<dbReference type="Gene3D" id="3.30.360.110">
    <property type="entry name" value="S-adenosylmethionine decarboxylase domain"/>
    <property type="match status" value="1"/>
</dbReference>
<dbReference type="HAMAP" id="MF_00464">
    <property type="entry name" value="AdoMetDC_1"/>
    <property type="match status" value="1"/>
</dbReference>
<dbReference type="InterPro" id="IPR042286">
    <property type="entry name" value="AdoMetDC_C"/>
</dbReference>
<dbReference type="InterPro" id="IPR003826">
    <property type="entry name" value="AdoMetDC_fam_prok"/>
</dbReference>
<dbReference type="InterPro" id="IPR042284">
    <property type="entry name" value="AdoMetDC_N"/>
</dbReference>
<dbReference type="InterPro" id="IPR016067">
    <property type="entry name" value="S-AdoMet_deCO2ase_core"/>
</dbReference>
<dbReference type="InterPro" id="IPR017716">
    <property type="entry name" value="S-AdoMet_deCOase_pro-enz"/>
</dbReference>
<dbReference type="NCBIfam" id="TIGR03330">
    <property type="entry name" value="SAM_DCase_Bsu"/>
    <property type="match status" value="1"/>
</dbReference>
<dbReference type="PANTHER" id="PTHR33866">
    <property type="entry name" value="S-ADENOSYLMETHIONINE DECARBOXYLASE PROENZYME"/>
    <property type="match status" value="1"/>
</dbReference>
<dbReference type="PANTHER" id="PTHR33866:SF2">
    <property type="entry name" value="S-ADENOSYLMETHIONINE DECARBOXYLASE PROENZYME"/>
    <property type="match status" value="1"/>
</dbReference>
<dbReference type="Pfam" id="PF02675">
    <property type="entry name" value="AdoMet_dc"/>
    <property type="match status" value="1"/>
</dbReference>
<dbReference type="SUPFAM" id="SSF56276">
    <property type="entry name" value="S-adenosylmethionine decarboxylase"/>
    <property type="match status" value="1"/>
</dbReference>
<comment type="function">
    <text evidence="1">Catalyzes the decarboxylation of S-adenosylmethionine to S-adenosylmethioninamine (dcAdoMet), the propylamine donor required for the synthesis of the polyamines spermine and spermidine from the diamine putrescine.</text>
</comment>
<comment type="catalytic activity">
    <reaction evidence="1">
        <text>S-adenosyl-L-methionine + H(+) = S-adenosyl 3-(methylsulfanyl)propylamine + CO2</text>
        <dbReference type="Rhea" id="RHEA:15981"/>
        <dbReference type="ChEBI" id="CHEBI:15378"/>
        <dbReference type="ChEBI" id="CHEBI:16526"/>
        <dbReference type="ChEBI" id="CHEBI:57443"/>
        <dbReference type="ChEBI" id="CHEBI:59789"/>
        <dbReference type="EC" id="4.1.1.50"/>
    </reaction>
</comment>
<comment type="cofactor">
    <cofactor evidence="1">
        <name>pyruvate</name>
        <dbReference type="ChEBI" id="CHEBI:15361"/>
    </cofactor>
    <text evidence="1">Binds 1 pyruvoyl group covalently per subunit.</text>
</comment>
<comment type="pathway">
    <text evidence="1">Amine and polyamine biosynthesis; S-adenosylmethioninamine biosynthesis; S-adenosylmethioninamine from S-adenosyl-L-methionine: step 1/1.</text>
</comment>
<comment type="subunit">
    <text evidence="1">Heterotetramer of two alpha and two beta chains arranged as a dimer of alpha/beta heterodimers.</text>
</comment>
<comment type="PTM">
    <text evidence="1">Is synthesized initially as an inactive proenzyme. Formation of the active enzyme involves a self-maturation process in which the active site pyruvoyl group is generated from an internal serine residue via an autocatalytic post-translational modification. Two non-identical subunits are generated from the proenzyme in this reaction, and the pyruvate is formed at the N-terminus of the alpha chain, which is derived from the carboxyl end of the proenzyme. The post-translation cleavage follows an unusual pathway, termed non-hydrolytic serinolysis, in which the side chain hydroxyl group of the serine supplies its oxygen atom to form the C-terminus of the beta chain, while the remainder of the serine residue undergoes an oxidative deamination to produce ammonia and the pyruvoyl group blocking the N-terminus of the alpha chain.</text>
</comment>
<comment type="similarity">
    <text evidence="1">Belongs to the prokaryotic AdoMetDC family. Type 1 subfamily.</text>
</comment>
<feature type="chain" id="PRO_1000125457" description="S-adenosylmethionine decarboxylase beta chain" evidence="1">
    <location>
        <begin position="1"/>
        <end position="70"/>
    </location>
</feature>
<feature type="chain" id="PRO_1000125458" description="S-adenosylmethionine decarboxylase alpha chain" evidence="1">
    <location>
        <begin position="71"/>
        <end position="125"/>
    </location>
</feature>
<feature type="active site" description="Schiff-base intermediate with substrate; via pyruvic acid" evidence="1">
    <location>
        <position position="71"/>
    </location>
</feature>
<feature type="active site" description="Proton acceptor; for processing activity" evidence="1">
    <location>
        <position position="76"/>
    </location>
</feature>
<feature type="active site" description="Proton donor; for catalytic activity" evidence="1">
    <location>
        <position position="91"/>
    </location>
</feature>
<feature type="site" description="Cleavage (non-hydrolytic); by autolysis" evidence="1">
    <location>
        <begin position="70"/>
        <end position="71"/>
    </location>
</feature>
<feature type="modified residue" description="Pyruvic acid (Ser); by autocatalysis" evidence="1">
    <location>
        <position position="71"/>
    </location>
</feature>
<accession>A4WIJ1</accession>
<organism>
    <name type="scientific">Pyrobaculum arsenaticum (strain DSM 13514 / JCM 11321 / PZ6)</name>
    <dbReference type="NCBI Taxonomy" id="340102"/>
    <lineage>
        <taxon>Archaea</taxon>
        <taxon>Thermoproteota</taxon>
        <taxon>Thermoprotei</taxon>
        <taxon>Thermoproteales</taxon>
        <taxon>Thermoproteaceae</taxon>
        <taxon>Pyrobaculum</taxon>
    </lineage>
</organism>
<sequence length="125" mass="13465">MAGGVGGRVVVGRHVYGNLYGCDARVLGDEAALITIVKEAVRVANAMLLSIGSYRFGPNGGLTVFAVVAESHISIHTWPEHGFATVDVYTCGDHTDPKAAFDFIVEKLSPKKIEVFYGDRSMYSE</sequence>
<reference key="1">
    <citation type="submission" date="2007-04" db="EMBL/GenBank/DDBJ databases">
        <title>Complete sequence of Pyrobaculum arsenaticum DSM 13514.</title>
        <authorList>
            <consortium name="US DOE Joint Genome Institute"/>
            <person name="Copeland A."/>
            <person name="Lucas S."/>
            <person name="Lapidus A."/>
            <person name="Barry K."/>
            <person name="Glavina del Rio T."/>
            <person name="Dalin E."/>
            <person name="Tice H."/>
            <person name="Pitluck S."/>
            <person name="Chain P."/>
            <person name="Malfatti S."/>
            <person name="Shin M."/>
            <person name="Vergez L."/>
            <person name="Schmutz J."/>
            <person name="Larimer F."/>
            <person name="Land M."/>
            <person name="Hauser L."/>
            <person name="Kyrpides N."/>
            <person name="Mikhailova N."/>
            <person name="Cozen A.E."/>
            <person name="Fitz-Gibbon S.T."/>
            <person name="House C.H."/>
            <person name="Saltikov C."/>
            <person name="Lowe T.M."/>
            <person name="Richardson P."/>
        </authorList>
    </citation>
    <scope>NUCLEOTIDE SEQUENCE [LARGE SCALE GENOMIC DNA]</scope>
    <source>
        <strain>ATCC 700994 / DSM 13514 / JCM 11321 / PZ6</strain>
    </source>
</reference>
<gene>
    <name evidence="1" type="primary">speH</name>
    <name type="ordered locus">Pars_0617</name>
</gene>
<proteinExistence type="inferred from homology"/>
<keyword id="KW-0068">Autocatalytic cleavage</keyword>
<keyword id="KW-0210">Decarboxylase</keyword>
<keyword id="KW-0456">Lyase</keyword>
<keyword id="KW-0620">Polyamine biosynthesis</keyword>
<keyword id="KW-0670">Pyruvate</keyword>
<keyword id="KW-0949">S-adenosyl-L-methionine</keyword>
<keyword id="KW-0704">Schiff base</keyword>
<keyword id="KW-0745">Spermidine biosynthesis</keyword>
<keyword id="KW-0865">Zymogen</keyword>